<accession>A5VIJ0</accession>
<keyword id="KW-0963">Cytoplasm</keyword>
<keyword id="KW-1185">Reference proteome</keyword>
<keyword id="KW-0694">RNA-binding</keyword>
<sequence length="157" mass="18262">MAKKSHQENNDNLIAQNKKARHDYFVTDTVEAGLVLTGTEIKSVRAHRVNLKDGFAQVRNGEAWLMNVHISEYDNGTYFNQDPLRNRKLLLHKKEINKLVGALQDKGVTLIPLKMYIKHGYAKVLLGLAKGKHQYDKREAIKRREQNREIERVMKHY</sequence>
<evidence type="ECO:0000255" key="1">
    <source>
        <dbReference type="HAMAP-Rule" id="MF_00023"/>
    </source>
</evidence>
<gene>
    <name evidence="1" type="primary">smpB</name>
    <name type="ordered locus">Lreu_0395</name>
</gene>
<dbReference type="EMBL" id="CP000705">
    <property type="protein sequence ID" value="ABQ82664.1"/>
    <property type="molecule type" value="Genomic_DNA"/>
</dbReference>
<dbReference type="RefSeq" id="WP_003666449.1">
    <property type="nucleotide sequence ID" value="NZ_AZDD01000021.1"/>
</dbReference>
<dbReference type="SMR" id="A5VIJ0"/>
<dbReference type="STRING" id="557436.Lreu_0395"/>
<dbReference type="GeneID" id="77192148"/>
<dbReference type="KEGG" id="lre:Lreu_0395"/>
<dbReference type="PATRIC" id="fig|557436.17.peg.827"/>
<dbReference type="eggNOG" id="COG0691">
    <property type="taxonomic scope" value="Bacteria"/>
</dbReference>
<dbReference type="HOGENOM" id="CLU_108953_0_0_9"/>
<dbReference type="Proteomes" id="UP000001991">
    <property type="component" value="Chromosome"/>
</dbReference>
<dbReference type="GO" id="GO:0005829">
    <property type="term" value="C:cytosol"/>
    <property type="evidence" value="ECO:0007669"/>
    <property type="project" value="TreeGrafter"/>
</dbReference>
<dbReference type="GO" id="GO:0003723">
    <property type="term" value="F:RNA binding"/>
    <property type="evidence" value="ECO:0007669"/>
    <property type="project" value="UniProtKB-UniRule"/>
</dbReference>
<dbReference type="GO" id="GO:0070929">
    <property type="term" value="P:trans-translation"/>
    <property type="evidence" value="ECO:0007669"/>
    <property type="project" value="UniProtKB-UniRule"/>
</dbReference>
<dbReference type="CDD" id="cd09294">
    <property type="entry name" value="SmpB"/>
    <property type="match status" value="1"/>
</dbReference>
<dbReference type="Gene3D" id="2.40.280.10">
    <property type="match status" value="1"/>
</dbReference>
<dbReference type="HAMAP" id="MF_00023">
    <property type="entry name" value="SmpB"/>
    <property type="match status" value="1"/>
</dbReference>
<dbReference type="InterPro" id="IPR023620">
    <property type="entry name" value="SmpB"/>
</dbReference>
<dbReference type="InterPro" id="IPR000037">
    <property type="entry name" value="SsrA-bd_prot"/>
</dbReference>
<dbReference type="InterPro" id="IPR020081">
    <property type="entry name" value="SsrA-bd_prot_CS"/>
</dbReference>
<dbReference type="NCBIfam" id="NF003843">
    <property type="entry name" value="PRK05422.1"/>
    <property type="match status" value="1"/>
</dbReference>
<dbReference type="NCBIfam" id="TIGR00086">
    <property type="entry name" value="smpB"/>
    <property type="match status" value="1"/>
</dbReference>
<dbReference type="PANTHER" id="PTHR30308:SF2">
    <property type="entry name" value="SSRA-BINDING PROTEIN"/>
    <property type="match status" value="1"/>
</dbReference>
<dbReference type="PANTHER" id="PTHR30308">
    <property type="entry name" value="TMRNA-BINDING COMPONENT OF TRANS-TRANSLATION TAGGING COMPLEX"/>
    <property type="match status" value="1"/>
</dbReference>
<dbReference type="Pfam" id="PF01668">
    <property type="entry name" value="SmpB"/>
    <property type="match status" value="1"/>
</dbReference>
<dbReference type="SUPFAM" id="SSF74982">
    <property type="entry name" value="Small protein B (SmpB)"/>
    <property type="match status" value="1"/>
</dbReference>
<dbReference type="PROSITE" id="PS01317">
    <property type="entry name" value="SSRP"/>
    <property type="match status" value="1"/>
</dbReference>
<proteinExistence type="inferred from homology"/>
<reference key="1">
    <citation type="journal article" date="2011" name="PLoS Genet.">
        <title>The evolution of host specialization in the vertebrate gut symbiont Lactobacillus reuteri.</title>
        <authorList>
            <person name="Frese S.A."/>
            <person name="Benson A.K."/>
            <person name="Tannock G.W."/>
            <person name="Loach D.M."/>
            <person name="Kim J."/>
            <person name="Zhang M."/>
            <person name="Oh P.L."/>
            <person name="Heng N.C."/>
            <person name="Patil P.B."/>
            <person name="Juge N."/>
            <person name="Mackenzie D.A."/>
            <person name="Pearson B.M."/>
            <person name="Lapidus A."/>
            <person name="Dalin E."/>
            <person name="Tice H."/>
            <person name="Goltsman E."/>
            <person name="Land M."/>
            <person name="Hauser L."/>
            <person name="Ivanova N."/>
            <person name="Kyrpides N.C."/>
            <person name="Walter J."/>
        </authorList>
    </citation>
    <scope>NUCLEOTIDE SEQUENCE [LARGE SCALE GENOMIC DNA]</scope>
    <source>
        <strain>DSM 20016</strain>
    </source>
</reference>
<organism>
    <name type="scientific">Limosilactobacillus reuteri (strain DSM 20016)</name>
    <name type="common">Lactobacillus reuteri</name>
    <dbReference type="NCBI Taxonomy" id="557436"/>
    <lineage>
        <taxon>Bacteria</taxon>
        <taxon>Bacillati</taxon>
        <taxon>Bacillota</taxon>
        <taxon>Bacilli</taxon>
        <taxon>Lactobacillales</taxon>
        <taxon>Lactobacillaceae</taxon>
        <taxon>Limosilactobacillus</taxon>
    </lineage>
</organism>
<protein>
    <recommendedName>
        <fullName evidence="1">SsrA-binding protein</fullName>
    </recommendedName>
    <alternativeName>
        <fullName evidence="1">Small protein B</fullName>
    </alternativeName>
</protein>
<feature type="chain" id="PRO_0000331058" description="SsrA-binding protein">
    <location>
        <begin position="1"/>
        <end position="157"/>
    </location>
</feature>
<comment type="function">
    <text evidence="1">Required for rescue of stalled ribosomes mediated by trans-translation. Binds to transfer-messenger RNA (tmRNA), required for stable association of tmRNA with ribosomes. tmRNA and SmpB together mimic tRNA shape, replacing the anticodon stem-loop with SmpB. tmRNA is encoded by the ssrA gene; the 2 termini fold to resemble tRNA(Ala) and it encodes a 'tag peptide', a short internal open reading frame. During trans-translation Ala-aminoacylated tmRNA acts like a tRNA, entering the A-site of stalled ribosomes, displacing the stalled mRNA. The ribosome then switches to translate the ORF on the tmRNA; the nascent peptide is terminated with the 'tag peptide' encoded by the tmRNA and targeted for degradation. The ribosome is freed to recommence translation, which seems to be the essential function of trans-translation.</text>
</comment>
<comment type="subcellular location">
    <subcellularLocation>
        <location evidence="1">Cytoplasm</location>
    </subcellularLocation>
    <text evidence="1">The tmRNA-SmpB complex associates with stalled 70S ribosomes.</text>
</comment>
<comment type="similarity">
    <text evidence="1">Belongs to the SmpB family.</text>
</comment>
<name>SSRP_LIMRD</name>